<gene>
    <name type="primary">En1</name>
    <name type="synonym">En-1</name>
</gene>
<accession>P09065</accession>
<accession>Q3USF7</accession>
<name>HME1_MOUSE</name>
<sequence length="401" mass="40981">MEEQQPEPKSQRDSGLGAVAAAAPSGLSLSLSPGASGSSGSDGDSVPVSPQPAPPSPPAAPCLPPLAHHPHLPPHPPPPPPPPPPPPQHLAAPAHQPQPAAQLHRTTNFFIDNILRPDFGCKKEQPLPQLLVASAAAGGGAAAGGGSRVERDRGQTGAGRDPVHSLGTRASGAASLLCAPDANCGPPDGSQPATAVSAGASKAGNPAAAAAAAAAAAAAAVAAAAAAASKPSDSGGGSGGNAGSPGAQGAKFPEHNPAILLMGSANGGPVVKTDSQQPLVWPAWVYCTRYSDRPSSGPRTRKLKKKKNEKEDKRPRTAFTAEQLQRLKAEFQANRYITEQRRQTLAQELSLNESQIKIWFQNKRAKIKKATGIKNGLALHLMAQGLYNHSTTTVQDKDESE</sequence>
<feature type="chain" id="PRO_0000196063" description="Homeobox protein engrailed-1">
    <location>
        <begin position="1"/>
        <end position="401"/>
    </location>
</feature>
<feature type="DNA-binding region" description="Homeobox" evidence="1">
    <location>
        <begin position="312"/>
        <end position="371"/>
    </location>
</feature>
<feature type="region of interest" description="Disordered" evidence="2">
    <location>
        <begin position="1"/>
        <end position="102"/>
    </location>
</feature>
<feature type="region of interest" description="Disordered" evidence="2">
    <location>
        <begin position="138"/>
        <end position="167"/>
    </location>
</feature>
<feature type="region of interest" description="Disordered" evidence="2">
    <location>
        <begin position="229"/>
        <end position="253"/>
    </location>
</feature>
<feature type="region of interest" description="Disordered" evidence="2">
    <location>
        <begin position="293"/>
        <end position="315"/>
    </location>
</feature>
<feature type="compositionally biased region" description="Low complexity" evidence="2">
    <location>
        <begin position="13"/>
        <end position="48"/>
    </location>
</feature>
<feature type="compositionally biased region" description="Pro residues" evidence="2">
    <location>
        <begin position="49"/>
        <end position="64"/>
    </location>
</feature>
<feature type="compositionally biased region" description="Pro residues" evidence="2">
    <location>
        <begin position="73"/>
        <end position="88"/>
    </location>
</feature>
<feature type="compositionally biased region" description="Low complexity" evidence="2">
    <location>
        <begin position="89"/>
        <end position="102"/>
    </location>
</feature>
<feature type="compositionally biased region" description="Gly residues" evidence="2">
    <location>
        <begin position="138"/>
        <end position="147"/>
    </location>
</feature>
<feature type="compositionally biased region" description="Gly residues" evidence="2">
    <location>
        <begin position="234"/>
        <end position="243"/>
    </location>
</feature>
<feature type="sequence conflict" description="In Ref. 1; AAA03660." evidence="4" ref="1">
    <original>S</original>
    <variation>G</variation>
    <location>
        <position position="197"/>
    </location>
</feature>
<protein>
    <recommendedName>
        <fullName>Homeobox protein engrailed-1</fullName>
        <shortName>Homeobox protein en-1</shortName>
        <shortName>Mo-En-1</shortName>
    </recommendedName>
</protein>
<reference key="1">
    <citation type="journal article" date="1992" name="Dev. Genet.">
        <title>Cloning and sequence comparison of the mouse, human, and chicken engrailed genes reveal potential functional domains and regulatory regions.</title>
        <authorList>
            <person name="Logan C."/>
            <person name="Hanks M.C."/>
            <person name="Noble-Topham S."/>
            <person name="Nallainathan D."/>
            <person name="Provart N.J."/>
            <person name="Joyner A.L."/>
        </authorList>
    </citation>
    <scope>NUCLEOTIDE SEQUENCE [MRNA]</scope>
</reference>
<reference key="2">
    <citation type="journal article" date="2005" name="Science">
        <title>The transcriptional landscape of the mammalian genome.</title>
        <authorList>
            <person name="Carninci P."/>
            <person name="Kasukawa T."/>
            <person name="Katayama S."/>
            <person name="Gough J."/>
            <person name="Frith M.C."/>
            <person name="Maeda N."/>
            <person name="Oyama R."/>
            <person name="Ravasi T."/>
            <person name="Lenhard B."/>
            <person name="Wells C."/>
            <person name="Kodzius R."/>
            <person name="Shimokawa K."/>
            <person name="Bajic V.B."/>
            <person name="Brenner S.E."/>
            <person name="Batalov S."/>
            <person name="Forrest A.R."/>
            <person name="Zavolan M."/>
            <person name="Davis M.J."/>
            <person name="Wilming L.G."/>
            <person name="Aidinis V."/>
            <person name="Allen J.E."/>
            <person name="Ambesi-Impiombato A."/>
            <person name="Apweiler R."/>
            <person name="Aturaliya R.N."/>
            <person name="Bailey T.L."/>
            <person name="Bansal M."/>
            <person name="Baxter L."/>
            <person name="Beisel K.W."/>
            <person name="Bersano T."/>
            <person name="Bono H."/>
            <person name="Chalk A.M."/>
            <person name="Chiu K.P."/>
            <person name="Choudhary V."/>
            <person name="Christoffels A."/>
            <person name="Clutterbuck D.R."/>
            <person name="Crowe M.L."/>
            <person name="Dalla E."/>
            <person name="Dalrymple B.P."/>
            <person name="de Bono B."/>
            <person name="Della Gatta G."/>
            <person name="di Bernardo D."/>
            <person name="Down T."/>
            <person name="Engstrom P."/>
            <person name="Fagiolini M."/>
            <person name="Faulkner G."/>
            <person name="Fletcher C.F."/>
            <person name="Fukushima T."/>
            <person name="Furuno M."/>
            <person name="Futaki S."/>
            <person name="Gariboldi M."/>
            <person name="Georgii-Hemming P."/>
            <person name="Gingeras T.R."/>
            <person name="Gojobori T."/>
            <person name="Green R.E."/>
            <person name="Gustincich S."/>
            <person name="Harbers M."/>
            <person name="Hayashi Y."/>
            <person name="Hensch T.K."/>
            <person name="Hirokawa N."/>
            <person name="Hill D."/>
            <person name="Huminiecki L."/>
            <person name="Iacono M."/>
            <person name="Ikeo K."/>
            <person name="Iwama A."/>
            <person name="Ishikawa T."/>
            <person name="Jakt M."/>
            <person name="Kanapin A."/>
            <person name="Katoh M."/>
            <person name="Kawasawa Y."/>
            <person name="Kelso J."/>
            <person name="Kitamura H."/>
            <person name="Kitano H."/>
            <person name="Kollias G."/>
            <person name="Krishnan S.P."/>
            <person name="Kruger A."/>
            <person name="Kummerfeld S.K."/>
            <person name="Kurochkin I.V."/>
            <person name="Lareau L.F."/>
            <person name="Lazarevic D."/>
            <person name="Lipovich L."/>
            <person name="Liu J."/>
            <person name="Liuni S."/>
            <person name="McWilliam S."/>
            <person name="Madan Babu M."/>
            <person name="Madera M."/>
            <person name="Marchionni L."/>
            <person name="Matsuda H."/>
            <person name="Matsuzawa S."/>
            <person name="Miki H."/>
            <person name="Mignone F."/>
            <person name="Miyake S."/>
            <person name="Morris K."/>
            <person name="Mottagui-Tabar S."/>
            <person name="Mulder N."/>
            <person name="Nakano N."/>
            <person name="Nakauchi H."/>
            <person name="Ng P."/>
            <person name="Nilsson R."/>
            <person name="Nishiguchi S."/>
            <person name="Nishikawa S."/>
            <person name="Nori F."/>
            <person name="Ohara O."/>
            <person name="Okazaki Y."/>
            <person name="Orlando V."/>
            <person name="Pang K.C."/>
            <person name="Pavan W.J."/>
            <person name="Pavesi G."/>
            <person name="Pesole G."/>
            <person name="Petrovsky N."/>
            <person name="Piazza S."/>
            <person name="Reed J."/>
            <person name="Reid J.F."/>
            <person name="Ring B.Z."/>
            <person name="Ringwald M."/>
            <person name="Rost B."/>
            <person name="Ruan Y."/>
            <person name="Salzberg S.L."/>
            <person name="Sandelin A."/>
            <person name="Schneider C."/>
            <person name="Schoenbach C."/>
            <person name="Sekiguchi K."/>
            <person name="Semple C.A."/>
            <person name="Seno S."/>
            <person name="Sessa L."/>
            <person name="Sheng Y."/>
            <person name="Shibata Y."/>
            <person name="Shimada H."/>
            <person name="Shimada K."/>
            <person name="Silva D."/>
            <person name="Sinclair B."/>
            <person name="Sperling S."/>
            <person name="Stupka E."/>
            <person name="Sugiura K."/>
            <person name="Sultana R."/>
            <person name="Takenaka Y."/>
            <person name="Taki K."/>
            <person name="Tammoja K."/>
            <person name="Tan S.L."/>
            <person name="Tang S."/>
            <person name="Taylor M.S."/>
            <person name="Tegner J."/>
            <person name="Teichmann S.A."/>
            <person name="Ueda H.R."/>
            <person name="van Nimwegen E."/>
            <person name="Verardo R."/>
            <person name="Wei C.L."/>
            <person name="Yagi K."/>
            <person name="Yamanishi H."/>
            <person name="Zabarovsky E."/>
            <person name="Zhu S."/>
            <person name="Zimmer A."/>
            <person name="Hide W."/>
            <person name="Bult C."/>
            <person name="Grimmond S.M."/>
            <person name="Teasdale R.D."/>
            <person name="Liu E.T."/>
            <person name="Brusic V."/>
            <person name="Quackenbush J."/>
            <person name="Wahlestedt C."/>
            <person name="Mattick J.S."/>
            <person name="Hume D.A."/>
            <person name="Kai C."/>
            <person name="Sasaki D."/>
            <person name="Tomaru Y."/>
            <person name="Fukuda S."/>
            <person name="Kanamori-Katayama M."/>
            <person name="Suzuki M."/>
            <person name="Aoki J."/>
            <person name="Arakawa T."/>
            <person name="Iida J."/>
            <person name="Imamura K."/>
            <person name="Itoh M."/>
            <person name="Kato T."/>
            <person name="Kawaji H."/>
            <person name="Kawagashira N."/>
            <person name="Kawashima T."/>
            <person name="Kojima M."/>
            <person name="Kondo S."/>
            <person name="Konno H."/>
            <person name="Nakano K."/>
            <person name="Ninomiya N."/>
            <person name="Nishio T."/>
            <person name="Okada M."/>
            <person name="Plessy C."/>
            <person name="Shibata K."/>
            <person name="Shiraki T."/>
            <person name="Suzuki S."/>
            <person name="Tagami M."/>
            <person name="Waki K."/>
            <person name="Watahiki A."/>
            <person name="Okamura-Oho Y."/>
            <person name="Suzuki H."/>
            <person name="Kawai J."/>
            <person name="Hayashizaki Y."/>
        </authorList>
    </citation>
    <scope>NUCLEOTIDE SEQUENCE [LARGE SCALE MRNA]</scope>
    <source>
        <strain>C57BL/6J</strain>
        <tissue>Medulla oblongata</tissue>
    </source>
</reference>
<reference key="3">
    <citation type="journal article" date="1987" name="Genes Dev.">
        <title>En-1 and En-2, two mouse genes with sequence homology to the Drosophila engrailed gene: expression during embryogenesis.</title>
        <authorList>
            <person name="Joyner A.L."/>
            <person name="Martin G.R."/>
        </authorList>
    </citation>
    <scope>NUCLEOTIDE SEQUENCE [GENOMIC DNA] OF 278-401</scope>
</reference>
<reference key="4">
    <citation type="journal article" date="1985" name="Cell">
        <title>Expression during embryogenesis of a mouse gene with sequence homology to the Drosophila engrailed gene.</title>
        <authorList>
            <person name="Joyner A.L."/>
            <person name="Kornberg T."/>
            <person name="Coleman K.G."/>
            <person name="Cox D.R."/>
            <person name="Martin G.R."/>
        </authorList>
    </citation>
    <scope>NUCLEOTIDE SEQUENCE [GENOMIC DNA] OF 298-401</scope>
</reference>
<reference key="5">
    <citation type="journal article" date="1990" name="FEBS Lett.">
        <title>Conservation of engrailed-like homeobox sequences during vertebrate evolution.</title>
        <authorList>
            <person name="Holland P.W.H."/>
            <person name="Williams N.A."/>
        </authorList>
    </citation>
    <scope>NUCLEOTIDE SEQUENCE OF 321-380</scope>
</reference>
<reference key="6">
    <citation type="journal article" date="1996" name="Nature">
        <title>The mouse Engrailed-1 gene and ventral limb patterning.</title>
        <authorList>
            <person name="Loomis C.A."/>
            <person name="Harris E."/>
            <person name="Michaud J."/>
            <person name="Wurst W."/>
            <person name="Hanks M."/>
            <person name="Joyner A.L."/>
        </authorList>
    </citation>
    <scope>FUNCTION</scope>
</reference>
<proteinExistence type="evidence at transcript level"/>
<keyword id="KW-0217">Developmental protein</keyword>
<keyword id="KW-0238">DNA-binding</keyword>
<keyword id="KW-0371">Homeobox</keyword>
<keyword id="KW-0539">Nucleus</keyword>
<keyword id="KW-1185">Reference proteome</keyword>
<evidence type="ECO:0000255" key="1">
    <source>
        <dbReference type="PROSITE-ProRule" id="PRU00108"/>
    </source>
</evidence>
<evidence type="ECO:0000256" key="2">
    <source>
        <dbReference type="SAM" id="MobiDB-lite"/>
    </source>
</evidence>
<evidence type="ECO:0000269" key="3">
    <source>
    </source>
</evidence>
<evidence type="ECO:0000305" key="4"/>
<dbReference type="EMBL" id="L12703">
    <property type="protein sequence ID" value="AAA03660.2"/>
    <property type="molecule type" value="mRNA"/>
</dbReference>
<dbReference type="EMBL" id="AK140408">
    <property type="protein sequence ID" value="BAE24375.1"/>
    <property type="molecule type" value="mRNA"/>
</dbReference>
<dbReference type="EMBL" id="Y00201">
    <property type="protein sequence ID" value="CAA68361.1"/>
    <property type="molecule type" value="Genomic_DNA"/>
</dbReference>
<dbReference type="CCDS" id="CCDS15235.1"/>
<dbReference type="PIR" id="A48423">
    <property type="entry name" value="A48423"/>
</dbReference>
<dbReference type="RefSeq" id="NP_034263.2">
    <property type="nucleotide sequence ID" value="NM_010133.3"/>
</dbReference>
<dbReference type="SMR" id="P09065"/>
<dbReference type="BioGRID" id="199444">
    <property type="interactions" value="2"/>
</dbReference>
<dbReference type="FunCoup" id="P09065">
    <property type="interactions" value="684"/>
</dbReference>
<dbReference type="STRING" id="10090.ENSMUSP00000078659"/>
<dbReference type="iPTMnet" id="P09065"/>
<dbReference type="PhosphoSitePlus" id="P09065"/>
<dbReference type="PaxDb" id="10090-ENSMUSP00000078659"/>
<dbReference type="ProteomicsDB" id="273185"/>
<dbReference type="Antibodypedia" id="33365">
    <property type="antibodies" value="250 antibodies from 30 providers"/>
</dbReference>
<dbReference type="DNASU" id="13798"/>
<dbReference type="Ensembl" id="ENSMUST00000079721.9">
    <property type="protein sequence ID" value="ENSMUSP00000078659.8"/>
    <property type="gene ID" value="ENSMUSG00000058665.9"/>
</dbReference>
<dbReference type="GeneID" id="13798"/>
<dbReference type="KEGG" id="mmu:13798"/>
<dbReference type="UCSC" id="uc007cjm.2">
    <property type="organism name" value="mouse"/>
</dbReference>
<dbReference type="AGR" id="MGI:95389"/>
<dbReference type="CTD" id="2019"/>
<dbReference type="MGI" id="MGI:95389">
    <property type="gene designation" value="En1"/>
</dbReference>
<dbReference type="VEuPathDB" id="HostDB:ENSMUSG00000058665"/>
<dbReference type="eggNOG" id="KOG0493">
    <property type="taxonomic scope" value="Eukaryota"/>
</dbReference>
<dbReference type="GeneTree" id="ENSGT00940000160811"/>
<dbReference type="HOGENOM" id="CLU_051739_0_1_1"/>
<dbReference type="InParanoid" id="P09065"/>
<dbReference type="OMA" id="CKKEQQQ"/>
<dbReference type="OrthoDB" id="6159439at2759"/>
<dbReference type="PhylomeDB" id="P09065"/>
<dbReference type="TreeFam" id="TF106461"/>
<dbReference type="BioGRID-ORCS" id="13798">
    <property type="hits" value="1 hit in 79 CRISPR screens"/>
</dbReference>
<dbReference type="PRO" id="PR:P09065"/>
<dbReference type="Proteomes" id="UP000000589">
    <property type="component" value="Chromosome 1"/>
</dbReference>
<dbReference type="RNAct" id="P09065">
    <property type="molecule type" value="protein"/>
</dbReference>
<dbReference type="Bgee" id="ENSMUSG00000058665">
    <property type="expression patterns" value="Expressed in presumptive midbrain and 106 other cell types or tissues"/>
</dbReference>
<dbReference type="GO" id="GO:0005634">
    <property type="term" value="C:nucleus"/>
    <property type="evidence" value="ECO:0007669"/>
    <property type="project" value="UniProtKB-SubCell"/>
</dbReference>
<dbReference type="GO" id="GO:0001227">
    <property type="term" value="F:DNA-binding transcription repressor activity, RNA polymerase II-specific"/>
    <property type="evidence" value="ECO:0007669"/>
    <property type="project" value="Ensembl"/>
</dbReference>
<dbReference type="GO" id="GO:0000978">
    <property type="term" value="F:RNA polymerase II cis-regulatory region sequence-specific DNA binding"/>
    <property type="evidence" value="ECO:0007669"/>
    <property type="project" value="Ensembl"/>
</dbReference>
<dbReference type="GO" id="GO:0008344">
    <property type="term" value="P:adult locomotory behavior"/>
    <property type="evidence" value="ECO:0000315"/>
    <property type="project" value="ParkinsonsUK-UCL"/>
</dbReference>
<dbReference type="GO" id="GO:0021953">
    <property type="term" value="P:central nervous system neuron differentiation"/>
    <property type="evidence" value="ECO:0000316"/>
    <property type="project" value="MGI"/>
</dbReference>
<dbReference type="GO" id="GO:0021549">
    <property type="term" value="P:cerebellum development"/>
    <property type="evidence" value="ECO:0000316"/>
    <property type="project" value="ParkinsonsUK-UCL"/>
</dbReference>
<dbReference type="GO" id="GO:0071542">
    <property type="term" value="P:dopaminergic neuron differentiation"/>
    <property type="evidence" value="ECO:0000316"/>
    <property type="project" value="MGI"/>
</dbReference>
<dbReference type="GO" id="GO:0009953">
    <property type="term" value="P:dorsal/ventral pattern formation"/>
    <property type="evidence" value="ECO:0000315"/>
    <property type="project" value="MGI"/>
</dbReference>
<dbReference type="GO" id="GO:0042756">
    <property type="term" value="P:drinking behavior"/>
    <property type="evidence" value="ECO:0000315"/>
    <property type="project" value="ParkinsonsUK-UCL"/>
</dbReference>
<dbReference type="GO" id="GO:1990403">
    <property type="term" value="P:embryonic brain development"/>
    <property type="evidence" value="ECO:0000315"/>
    <property type="project" value="ParkinsonsUK-UCL"/>
</dbReference>
<dbReference type="GO" id="GO:0035115">
    <property type="term" value="P:embryonic forelimb morphogenesis"/>
    <property type="evidence" value="ECO:0000316"/>
    <property type="project" value="MGI"/>
</dbReference>
<dbReference type="GO" id="GO:0030326">
    <property type="term" value="P:embryonic limb morphogenesis"/>
    <property type="evidence" value="ECO:0000315"/>
    <property type="project" value="ParkinsonsUK-UCL"/>
</dbReference>
<dbReference type="GO" id="GO:0030902">
    <property type="term" value="P:hindbrain development"/>
    <property type="evidence" value="ECO:0000316"/>
    <property type="project" value="MGI"/>
</dbReference>
<dbReference type="GO" id="GO:0060173">
    <property type="term" value="P:limb development"/>
    <property type="evidence" value="ECO:0000315"/>
    <property type="project" value="MGI"/>
</dbReference>
<dbReference type="GO" id="GO:0030901">
    <property type="term" value="P:midbrain development"/>
    <property type="evidence" value="ECO:0000316"/>
    <property type="project" value="ParkinsonsUK-UCL"/>
</dbReference>
<dbReference type="GO" id="GO:0030917">
    <property type="term" value="P:midbrain-hindbrain boundary development"/>
    <property type="evidence" value="ECO:0000315"/>
    <property type="project" value="MGI"/>
</dbReference>
<dbReference type="GO" id="GO:0061743">
    <property type="term" value="P:motor learning"/>
    <property type="evidence" value="ECO:0000315"/>
    <property type="project" value="ParkinsonsUK-UCL"/>
</dbReference>
<dbReference type="GO" id="GO:0035264">
    <property type="term" value="P:multicellular organism growth"/>
    <property type="evidence" value="ECO:0000315"/>
    <property type="project" value="MGI"/>
</dbReference>
<dbReference type="GO" id="GO:0043524">
    <property type="term" value="P:negative regulation of neuron apoptotic process"/>
    <property type="evidence" value="ECO:0000316"/>
    <property type="project" value="ParkinsonsUK-UCL"/>
</dbReference>
<dbReference type="GO" id="GO:0048666">
    <property type="term" value="P:neuron development"/>
    <property type="evidence" value="ECO:0000315"/>
    <property type="project" value="MGI"/>
</dbReference>
<dbReference type="GO" id="GO:0030182">
    <property type="term" value="P:neuron differentiation"/>
    <property type="evidence" value="ECO:0000316"/>
    <property type="project" value="MGI"/>
</dbReference>
<dbReference type="GO" id="GO:0043473">
    <property type="term" value="P:pigmentation"/>
    <property type="evidence" value="ECO:0000315"/>
    <property type="project" value="MGI"/>
</dbReference>
<dbReference type="GO" id="GO:0045944">
    <property type="term" value="P:positive regulation of transcription by RNA polymerase II"/>
    <property type="evidence" value="ECO:0000314"/>
    <property type="project" value="MGI"/>
</dbReference>
<dbReference type="GO" id="GO:0009954">
    <property type="term" value="P:proximal/distal pattern formation"/>
    <property type="evidence" value="ECO:0000315"/>
    <property type="project" value="MGI"/>
</dbReference>
<dbReference type="GO" id="GO:0010468">
    <property type="term" value="P:regulation of gene expression"/>
    <property type="evidence" value="ECO:0000315"/>
    <property type="project" value="MGI"/>
</dbReference>
<dbReference type="GO" id="GO:0042220">
    <property type="term" value="P:response to cocaine"/>
    <property type="evidence" value="ECO:0007669"/>
    <property type="project" value="Ensembl"/>
</dbReference>
<dbReference type="GO" id="GO:0035176">
    <property type="term" value="P:social behavior"/>
    <property type="evidence" value="ECO:0000315"/>
    <property type="project" value="ParkinsonsUK-UCL"/>
</dbReference>
<dbReference type="CDD" id="cd00086">
    <property type="entry name" value="homeodomain"/>
    <property type="match status" value="1"/>
</dbReference>
<dbReference type="FunFam" id="1.10.10.60:FF:000167">
    <property type="entry name" value="Homeobox protein engrailed-like"/>
    <property type="match status" value="1"/>
</dbReference>
<dbReference type="Gene3D" id="1.10.10.60">
    <property type="entry name" value="Homeodomain-like"/>
    <property type="match status" value="1"/>
</dbReference>
<dbReference type="InterPro" id="IPR050720">
    <property type="entry name" value="Engrailed_Homeobox_TFs"/>
</dbReference>
<dbReference type="InterPro" id="IPR001356">
    <property type="entry name" value="HD"/>
</dbReference>
<dbReference type="InterPro" id="IPR000747">
    <property type="entry name" value="HD_engrailed"/>
</dbReference>
<dbReference type="InterPro" id="IPR020479">
    <property type="entry name" value="HD_metazoa"/>
</dbReference>
<dbReference type="InterPro" id="IPR019549">
    <property type="entry name" value="Homeobox-engrailed_C-terminal"/>
</dbReference>
<dbReference type="InterPro" id="IPR019737">
    <property type="entry name" value="Homeobox-engrailed_CS"/>
</dbReference>
<dbReference type="InterPro" id="IPR017970">
    <property type="entry name" value="Homeobox_CS"/>
</dbReference>
<dbReference type="InterPro" id="IPR009057">
    <property type="entry name" value="Homeodomain-like_sf"/>
</dbReference>
<dbReference type="PANTHER" id="PTHR24341">
    <property type="entry name" value="HOMEOBOX PROTEIN ENGRAILED"/>
    <property type="match status" value="1"/>
</dbReference>
<dbReference type="PANTHER" id="PTHR24341:SF4">
    <property type="entry name" value="HOMEOBOX PROTEIN ENGRAILED-1"/>
    <property type="match status" value="1"/>
</dbReference>
<dbReference type="Pfam" id="PF10525">
    <property type="entry name" value="Engrail_1_C_sig"/>
    <property type="match status" value="1"/>
</dbReference>
<dbReference type="Pfam" id="PF00046">
    <property type="entry name" value="Homeodomain"/>
    <property type="match status" value="1"/>
</dbReference>
<dbReference type="PRINTS" id="PR00026">
    <property type="entry name" value="ENGRAILED"/>
</dbReference>
<dbReference type="PRINTS" id="PR00024">
    <property type="entry name" value="HOMEOBOX"/>
</dbReference>
<dbReference type="SMART" id="SM00389">
    <property type="entry name" value="HOX"/>
    <property type="match status" value="1"/>
</dbReference>
<dbReference type="SUPFAM" id="SSF101447">
    <property type="entry name" value="Formin homology 2 domain (FH2 domain)"/>
    <property type="match status" value="1"/>
</dbReference>
<dbReference type="SUPFAM" id="SSF46689">
    <property type="entry name" value="Homeodomain-like"/>
    <property type="match status" value="1"/>
</dbReference>
<dbReference type="PROSITE" id="PS00033">
    <property type="entry name" value="ENGRAILED"/>
    <property type="match status" value="1"/>
</dbReference>
<dbReference type="PROSITE" id="PS00027">
    <property type="entry name" value="HOMEOBOX_1"/>
    <property type="match status" value="1"/>
</dbReference>
<dbReference type="PROSITE" id="PS50071">
    <property type="entry name" value="HOMEOBOX_2"/>
    <property type="match status" value="1"/>
</dbReference>
<comment type="function">
    <text evidence="3">Required for proper formation of the apical ectodermal ridge and correct dorsal-ventral patterning in the limb.</text>
</comment>
<comment type="subcellular location">
    <subcellularLocation>
        <location>Nucleus</location>
    </subcellularLocation>
</comment>
<comment type="similarity">
    <text evidence="4">Belongs to the engrailed homeobox family.</text>
</comment>
<organism>
    <name type="scientific">Mus musculus</name>
    <name type="common">Mouse</name>
    <dbReference type="NCBI Taxonomy" id="10090"/>
    <lineage>
        <taxon>Eukaryota</taxon>
        <taxon>Metazoa</taxon>
        <taxon>Chordata</taxon>
        <taxon>Craniata</taxon>
        <taxon>Vertebrata</taxon>
        <taxon>Euteleostomi</taxon>
        <taxon>Mammalia</taxon>
        <taxon>Eutheria</taxon>
        <taxon>Euarchontoglires</taxon>
        <taxon>Glires</taxon>
        <taxon>Rodentia</taxon>
        <taxon>Myomorpha</taxon>
        <taxon>Muroidea</taxon>
        <taxon>Muridae</taxon>
        <taxon>Murinae</taxon>
        <taxon>Mus</taxon>
        <taxon>Mus</taxon>
    </lineage>
</organism>